<organism>
    <name type="scientific">Shewanella sp. (strain ANA-3)</name>
    <dbReference type="NCBI Taxonomy" id="94122"/>
    <lineage>
        <taxon>Bacteria</taxon>
        <taxon>Pseudomonadati</taxon>
        <taxon>Pseudomonadota</taxon>
        <taxon>Gammaproteobacteria</taxon>
        <taxon>Alteromonadales</taxon>
        <taxon>Shewanellaceae</taxon>
        <taxon>Shewanella</taxon>
    </lineage>
</organism>
<comment type="function">
    <text evidence="1">Redox regulated molecular chaperone. Protects both thermally unfolding and oxidatively damaged proteins from irreversible aggregation. Plays an important role in the bacterial defense system toward oxidative stress.</text>
</comment>
<comment type="subcellular location">
    <subcellularLocation>
        <location evidence="1">Cytoplasm</location>
    </subcellularLocation>
</comment>
<comment type="PTM">
    <text evidence="1">Under oxidizing conditions two disulfide bonds are formed involving the reactive cysteines. Under reducing conditions zinc is bound to the reactive cysteines and the protein is inactive.</text>
</comment>
<comment type="similarity">
    <text evidence="1">Belongs to the HSP33 family.</text>
</comment>
<reference key="1">
    <citation type="submission" date="2006-09" db="EMBL/GenBank/DDBJ databases">
        <title>Complete sequence of chromosome 1 of Shewanella sp. ANA-3.</title>
        <authorList>
            <person name="Copeland A."/>
            <person name="Lucas S."/>
            <person name="Lapidus A."/>
            <person name="Barry K."/>
            <person name="Detter J.C."/>
            <person name="Glavina del Rio T."/>
            <person name="Hammon N."/>
            <person name="Israni S."/>
            <person name="Dalin E."/>
            <person name="Tice H."/>
            <person name="Pitluck S."/>
            <person name="Chertkov O."/>
            <person name="Brettin T."/>
            <person name="Bruce D."/>
            <person name="Han C."/>
            <person name="Tapia R."/>
            <person name="Gilna P."/>
            <person name="Schmutz J."/>
            <person name="Larimer F."/>
            <person name="Land M."/>
            <person name="Hauser L."/>
            <person name="Kyrpides N."/>
            <person name="Kim E."/>
            <person name="Newman D."/>
            <person name="Salticov C."/>
            <person name="Konstantinidis K."/>
            <person name="Klappenback J."/>
            <person name="Tiedje J."/>
            <person name="Richardson P."/>
        </authorList>
    </citation>
    <scope>NUCLEOTIDE SEQUENCE [LARGE SCALE GENOMIC DNA]</scope>
    <source>
        <strain>ANA-3</strain>
    </source>
</reference>
<protein>
    <recommendedName>
        <fullName evidence="1">33 kDa chaperonin</fullName>
    </recommendedName>
    <alternativeName>
        <fullName evidence="1">Heat shock protein 33 homolog</fullName>
        <shortName evidence="1">HSP33</shortName>
    </alternativeName>
</protein>
<keyword id="KW-0143">Chaperone</keyword>
<keyword id="KW-0963">Cytoplasm</keyword>
<keyword id="KW-1015">Disulfide bond</keyword>
<keyword id="KW-0676">Redox-active center</keyword>
<keyword id="KW-0862">Zinc</keyword>
<gene>
    <name evidence="1" type="primary">hslO</name>
    <name type="ordered locus">Shewana3_0148</name>
</gene>
<proteinExistence type="inferred from homology"/>
<evidence type="ECO:0000255" key="1">
    <source>
        <dbReference type="HAMAP-Rule" id="MF_00117"/>
    </source>
</evidence>
<sequence length="286" mass="31485">MIQDILNRYLFDNADVRGELVQLQDSYQQVIGSHAYPPVLQILLGELLAATSLLTATLKFSGDISVQLQGNGPVSLAVINGNNQQQLRGIARWEGELADDASLADLFGQGYMVITLTPDEGERYQGVVALDKPTLAACVEDYFNQSEQLPTALWLFADGKQAAGMFLQVLPSQEDHNADFEHLCQLTATIKAEELFTLDAQDILHRLYHQEEVRLFDPIEVSFKCTCSRERSAAAIKTIDQAEVEAILAEDGKVEMGCEYCNAKYVFDGIDIAAIYANGTGSNTQQ</sequence>
<dbReference type="EMBL" id="CP000469">
    <property type="protein sequence ID" value="ABK46392.1"/>
    <property type="molecule type" value="Genomic_DNA"/>
</dbReference>
<dbReference type="RefSeq" id="WP_011715420.1">
    <property type="nucleotide sequence ID" value="NC_008577.1"/>
</dbReference>
<dbReference type="SMR" id="A0KRH3"/>
<dbReference type="STRING" id="94122.Shewana3_0148"/>
<dbReference type="KEGG" id="shn:Shewana3_0148"/>
<dbReference type="eggNOG" id="COG1281">
    <property type="taxonomic scope" value="Bacteria"/>
</dbReference>
<dbReference type="HOGENOM" id="CLU_054493_0_0_6"/>
<dbReference type="OrthoDB" id="9793753at2"/>
<dbReference type="Proteomes" id="UP000002589">
    <property type="component" value="Chromosome"/>
</dbReference>
<dbReference type="GO" id="GO:0005737">
    <property type="term" value="C:cytoplasm"/>
    <property type="evidence" value="ECO:0007669"/>
    <property type="project" value="UniProtKB-SubCell"/>
</dbReference>
<dbReference type="GO" id="GO:0044183">
    <property type="term" value="F:protein folding chaperone"/>
    <property type="evidence" value="ECO:0007669"/>
    <property type="project" value="TreeGrafter"/>
</dbReference>
<dbReference type="GO" id="GO:0051082">
    <property type="term" value="F:unfolded protein binding"/>
    <property type="evidence" value="ECO:0007669"/>
    <property type="project" value="UniProtKB-UniRule"/>
</dbReference>
<dbReference type="GO" id="GO:0042026">
    <property type="term" value="P:protein refolding"/>
    <property type="evidence" value="ECO:0007669"/>
    <property type="project" value="TreeGrafter"/>
</dbReference>
<dbReference type="CDD" id="cd00498">
    <property type="entry name" value="Hsp33"/>
    <property type="match status" value="1"/>
</dbReference>
<dbReference type="Gene3D" id="1.10.287.480">
    <property type="entry name" value="helix hairpin bin"/>
    <property type="match status" value="1"/>
</dbReference>
<dbReference type="Gene3D" id="3.55.30.10">
    <property type="entry name" value="Hsp33 domain"/>
    <property type="match status" value="1"/>
</dbReference>
<dbReference type="Gene3D" id="3.90.1280.10">
    <property type="entry name" value="HSP33 redox switch-like"/>
    <property type="match status" value="1"/>
</dbReference>
<dbReference type="HAMAP" id="MF_00117">
    <property type="entry name" value="HslO"/>
    <property type="match status" value="1"/>
</dbReference>
<dbReference type="InterPro" id="IPR000397">
    <property type="entry name" value="Heat_shock_Hsp33"/>
</dbReference>
<dbReference type="InterPro" id="IPR016154">
    <property type="entry name" value="Heat_shock_Hsp33_C"/>
</dbReference>
<dbReference type="InterPro" id="IPR016153">
    <property type="entry name" value="Heat_shock_Hsp33_N"/>
</dbReference>
<dbReference type="InterPro" id="IPR023212">
    <property type="entry name" value="Hsp33_helix_hairpin_bin_dom_sf"/>
</dbReference>
<dbReference type="NCBIfam" id="NF001033">
    <property type="entry name" value="PRK00114.1"/>
    <property type="match status" value="1"/>
</dbReference>
<dbReference type="PANTHER" id="PTHR30111">
    <property type="entry name" value="33 KDA CHAPERONIN"/>
    <property type="match status" value="1"/>
</dbReference>
<dbReference type="PANTHER" id="PTHR30111:SF1">
    <property type="entry name" value="33 KDA CHAPERONIN"/>
    <property type="match status" value="1"/>
</dbReference>
<dbReference type="Pfam" id="PF01430">
    <property type="entry name" value="HSP33"/>
    <property type="match status" value="1"/>
</dbReference>
<dbReference type="PIRSF" id="PIRSF005261">
    <property type="entry name" value="Heat_shock_Hsp33"/>
    <property type="match status" value="1"/>
</dbReference>
<dbReference type="SUPFAM" id="SSF64397">
    <property type="entry name" value="Hsp33 domain"/>
    <property type="match status" value="1"/>
</dbReference>
<dbReference type="SUPFAM" id="SSF118352">
    <property type="entry name" value="HSP33 redox switch-like"/>
    <property type="match status" value="1"/>
</dbReference>
<feature type="chain" id="PRO_1000015569" description="33 kDa chaperonin">
    <location>
        <begin position="1"/>
        <end position="286"/>
    </location>
</feature>
<feature type="disulfide bond" description="Redox-active" evidence="1">
    <location>
        <begin position="225"/>
        <end position="227"/>
    </location>
</feature>
<feature type="disulfide bond" description="Redox-active" evidence="1">
    <location>
        <begin position="258"/>
        <end position="261"/>
    </location>
</feature>
<accession>A0KRH3</accession>
<name>HSLO_SHESA</name>